<feature type="signal peptide" evidence="2">
    <location>
        <begin position="1"/>
        <end position="25"/>
    </location>
</feature>
<feature type="chain" id="PRO_0000318199" description="Lymphocyte antigen 6H">
    <location>
        <begin position="26"/>
        <end status="unknown"/>
    </location>
</feature>
<feature type="propeptide" id="PRO_0000318200" description="Removed in mature form" evidence="2">
    <location>
        <begin status="unknown"/>
        <end position="140"/>
    </location>
</feature>
<feature type="domain" description="UPAR/Ly6">
    <location>
        <begin position="26"/>
        <end position="91"/>
    </location>
</feature>
<feature type="glycosylation site" description="N-linked (GlcNAc...) asparagine" evidence="2">
    <location>
        <position position="36"/>
    </location>
</feature>
<feature type="disulfide bond" evidence="1">
    <location>
        <begin position="28"/>
        <end position="52"/>
    </location>
</feature>
<feature type="disulfide bond" evidence="1">
    <location>
        <begin position="31"/>
        <end position="40"/>
    </location>
</feature>
<feature type="disulfide bond" evidence="1">
    <location>
        <begin position="45"/>
        <end position="73"/>
    </location>
</feature>
<feature type="disulfide bond" evidence="1">
    <location>
        <begin position="77"/>
        <end position="104"/>
    </location>
</feature>
<feature type="disulfide bond" evidence="1">
    <location>
        <begin position="105"/>
        <end position="110"/>
    </location>
</feature>
<name>LY6H_BOVIN</name>
<accession>A0JNB3</accession>
<protein>
    <recommendedName>
        <fullName>Lymphocyte antigen 6H</fullName>
        <shortName>Ly-6H</shortName>
    </recommendedName>
</protein>
<keyword id="KW-1003">Cell membrane</keyword>
<keyword id="KW-1015">Disulfide bond</keyword>
<keyword id="KW-0325">Glycoprotein</keyword>
<keyword id="KW-0336">GPI-anchor</keyword>
<keyword id="KW-0449">Lipoprotein</keyword>
<keyword id="KW-0472">Membrane</keyword>
<keyword id="KW-1185">Reference proteome</keyword>
<keyword id="KW-0732">Signal</keyword>
<gene>
    <name type="primary">LY6H</name>
</gene>
<dbReference type="EMBL" id="BC126596">
    <property type="protein sequence ID" value="AAI26597.1"/>
    <property type="molecule type" value="mRNA"/>
</dbReference>
<dbReference type="RefSeq" id="NP_001073104.1">
    <property type="nucleotide sequence ID" value="NM_001079636.2"/>
</dbReference>
<dbReference type="FunCoup" id="A0JNB3">
    <property type="interactions" value="635"/>
</dbReference>
<dbReference type="STRING" id="9913.ENSBTAP00000015841"/>
<dbReference type="GlyCosmos" id="A0JNB3">
    <property type="glycosylation" value="1 site, No reported glycans"/>
</dbReference>
<dbReference type="GlyGen" id="A0JNB3">
    <property type="glycosylation" value="1 site"/>
</dbReference>
<dbReference type="PaxDb" id="9913-ENSBTAP00000015841"/>
<dbReference type="GeneID" id="618749"/>
<dbReference type="KEGG" id="bta:618749"/>
<dbReference type="CTD" id="4062"/>
<dbReference type="eggNOG" id="ENOG502RVP9">
    <property type="taxonomic scope" value="Eukaryota"/>
</dbReference>
<dbReference type="InParanoid" id="A0JNB3"/>
<dbReference type="OrthoDB" id="9620902at2759"/>
<dbReference type="Proteomes" id="UP000009136">
    <property type="component" value="Unplaced"/>
</dbReference>
<dbReference type="GO" id="GO:0005886">
    <property type="term" value="C:plasma membrane"/>
    <property type="evidence" value="ECO:0000318"/>
    <property type="project" value="GO_Central"/>
</dbReference>
<dbReference type="GO" id="GO:0098552">
    <property type="term" value="C:side of membrane"/>
    <property type="evidence" value="ECO:0007669"/>
    <property type="project" value="UniProtKB-KW"/>
</dbReference>
<dbReference type="GO" id="GO:0045202">
    <property type="term" value="C:synapse"/>
    <property type="evidence" value="ECO:0007669"/>
    <property type="project" value="GOC"/>
</dbReference>
<dbReference type="GO" id="GO:0033130">
    <property type="term" value="F:acetylcholine receptor binding"/>
    <property type="evidence" value="ECO:0000318"/>
    <property type="project" value="GO_Central"/>
</dbReference>
<dbReference type="GO" id="GO:0030550">
    <property type="term" value="F:acetylcholine receptor inhibitor activity"/>
    <property type="evidence" value="ECO:0000318"/>
    <property type="project" value="GO_Central"/>
</dbReference>
<dbReference type="GO" id="GO:0095500">
    <property type="term" value="P:acetylcholine receptor signaling pathway"/>
    <property type="evidence" value="ECO:0000318"/>
    <property type="project" value="GO_Central"/>
</dbReference>
<dbReference type="CDD" id="cd23549">
    <property type="entry name" value="TFP_LU_ECD_Ly6H"/>
    <property type="match status" value="1"/>
</dbReference>
<dbReference type="FunFam" id="2.10.60.10:FF:000011">
    <property type="entry name" value="lymphocyte antigen 6H isoform X1"/>
    <property type="match status" value="1"/>
</dbReference>
<dbReference type="Gene3D" id="2.10.60.10">
    <property type="entry name" value="CD59"/>
    <property type="match status" value="1"/>
</dbReference>
<dbReference type="InterPro" id="IPR016054">
    <property type="entry name" value="LY6_UPA_recep-like"/>
</dbReference>
<dbReference type="InterPro" id="IPR051445">
    <property type="entry name" value="LY6H/LY6L_nAChR_modulators"/>
</dbReference>
<dbReference type="InterPro" id="IPR045860">
    <property type="entry name" value="Snake_toxin-like_sf"/>
</dbReference>
<dbReference type="PANTHER" id="PTHR32217">
    <property type="entry name" value="LYMPHOCYTE ANTIGEN 6H"/>
    <property type="match status" value="1"/>
</dbReference>
<dbReference type="PANTHER" id="PTHR32217:SF5">
    <property type="entry name" value="LYMPHOCYTE ANTIGEN 6H"/>
    <property type="match status" value="1"/>
</dbReference>
<dbReference type="Pfam" id="PF00021">
    <property type="entry name" value="UPAR_LY6"/>
    <property type="match status" value="1"/>
</dbReference>
<dbReference type="SMART" id="SM00134">
    <property type="entry name" value="LU"/>
    <property type="match status" value="1"/>
</dbReference>
<dbReference type="SUPFAM" id="SSF57302">
    <property type="entry name" value="Snake toxin-like"/>
    <property type="match status" value="1"/>
</dbReference>
<evidence type="ECO:0000250" key="1"/>
<evidence type="ECO:0000255" key="2"/>
<evidence type="ECO:0000305" key="3"/>
<sequence>MLPAAMKGLGLVLLAALLCSSPAHGLWCQDCTLTTNSSHCTPKQCHPSDTVCATVWITDPSSSRKDHSVNKMCASSCDFVKRHFFSDYLMGFINSGILKVDVDCCEKDLCNGVAQAGLSPWALAGGLLLSLGPALLWAGP</sequence>
<reference key="1">
    <citation type="submission" date="2006-10" db="EMBL/GenBank/DDBJ databases">
        <authorList>
            <consortium name="NIH - Mammalian Gene Collection (MGC) project"/>
        </authorList>
    </citation>
    <scope>NUCLEOTIDE SEQUENCE [LARGE SCALE MRNA]</scope>
    <source>
        <strain>Hereford</strain>
        <tissue>Fetal brain</tissue>
    </source>
</reference>
<comment type="subcellular location">
    <subcellularLocation>
        <location evidence="1">Cell membrane</location>
        <topology evidence="1">Lipid-anchor</topology>
        <topology evidence="1">GPI-anchor</topology>
    </subcellularLocation>
</comment>
<comment type="caution">
    <text evidence="3">It is uncertain whether Met-1 or Met-6 is the initiator.</text>
</comment>
<organism>
    <name type="scientific">Bos taurus</name>
    <name type="common">Bovine</name>
    <dbReference type="NCBI Taxonomy" id="9913"/>
    <lineage>
        <taxon>Eukaryota</taxon>
        <taxon>Metazoa</taxon>
        <taxon>Chordata</taxon>
        <taxon>Craniata</taxon>
        <taxon>Vertebrata</taxon>
        <taxon>Euteleostomi</taxon>
        <taxon>Mammalia</taxon>
        <taxon>Eutheria</taxon>
        <taxon>Laurasiatheria</taxon>
        <taxon>Artiodactyla</taxon>
        <taxon>Ruminantia</taxon>
        <taxon>Pecora</taxon>
        <taxon>Bovidae</taxon>
        <taxon>Bovinae</taxon>
        <taxon>Bos</taxon>
    </lineage>
</organism>
<proteinExistence type="evidence at transcript level"/>